<proteinExistence type="inferred from homology"/>
<sequence>MSHLLTMSELSEVEISEILKDAEDFANGKESKTTEQTFVANLFFENSTRTRFSFEVAEKRLGLDVLNFSADASSVQKGETLYDTIRTLESIGTKAVVIRHEQDRYFDELKDQVNIPILNAGDGCGNHPTQCLLDLLTIKQEFGRFEGLKIAIVGDVRHSRVARSNAEALTKLGATIYFASPEEWKDEDNTFGTYKPLDELVPEVDVMMLLRVQHERHDHYETDIMKEYHEKHGLTVEREKRMKEGSIIMHPAPVNRDVEIASELVECERSRIFKQMENGVYVRMAVLKRALPNVLGGMKHELFV</sequence>
<comment type="function">
    <text evidence="1">Catalyzes the condensation of carbamoyl phosphate and aspartate to form carbamoyl aspartate and inorganic phosphate, the committed step in the de novo pyrimidine nucleotide biosynthesis pathway.</text>
</comment>
<comment type="catalytic activity">
    <reaction evidence="1">
        <text>carbamoyl phosphate + L-aspartate = N-carbamoyl-L-aspartate + phosphate + H(+)</text>
        <dbReference type="Rhea" id="RHEA:20013"/>
        <dbReference type="ChEBI" id="CHEBI:15378"/>
        <dbReference type="ChEBI" id="CHEBI:29991"/>
        <dbReference type="ChEBI" id="CHEBI:32814"/>
        <dbReference type="ChEBI" id="CHEBI:43474"/>
        <dbReference type="ChEBI" id="CHEBI:58228"/>
        <dbReference type="EC" id="2.1.3.2"/>
    </reaction>
</comment>
<comment type="pathway">
    <text evidence="1">Pyrimidine metabolism; UMP biosynthesis via de novo pathway; (S)-dihydroorotate from bicarbonate: step 2/3.</text>
</comment>
<comment type="subunit">
    <text evidence="1">Heterododecamer (2C3:3R2) of six catalytic PyrB chains organized as two trimers (C3), and six regulatory PyrI chains organized as three dimers (R2).</text>
</comment>
<comment type="similarity">
    <text evidence="1">Belongs to the aspartate/ornithine carbamoyltransferase superfamily. ATCase family.</text>
</comment>
<name>PYRB_BACHK</name>
<feature type="chain" id="PRO_0000113096" description="Aspartate carbamoyltransferase catalytic subunit">
    <location>
        <begin position="1"/>
        <end position="304"/>
    </location>
</feature>
<feature type="binding site" evidence="1">
    <location>
        <position position="49"/>
    </location>
    <ligand>
        <name>carbamoyl phosphate</name>
        <dbReference type="ChEBI" id="CHEBI:58228"/>
    </ligand>
</feature>
<feature type="binding site" evidence="1">
    <location>
        <position position="50"/>
    </location>
    <ligand>
        <name>carbamoyl phosphate</name>
        <dbReference type="ChEBI" id="CHEBI:58228"/>
    </ligand>
</feature>
<feature type="binding site" evidence="1">
    <location>
        <position position="77"/>
    </location>
    <ligand>
        <name>L-aspartate</name>
        <dbReference type="ChEBI" id="CHEBI:29991"/>
    </ligand>
</feature>
<feature type="binding site" evidence="1">
    <location>
        <position position="99"/>
    </location>
    <ligand>
        <name>carbamoyl phosphate</name>
        <dbReference type="ChEBI" id="CHEBI:58228"/>
    </ligand>
</feature>
<feature type="binding site" evidence="1">
    <location>
        <position position="127"/>
    </location>
    <ligand>
        <name>carbamoyl phosphate</name>
        <dbReference type="ChEBI" id="CHEBI:58228"/>
    </ligand>
</feature>
<feature type="binding site" evidence="1">
    <location>
        <position position="130"/>
    </location>
    <ligand>
        <name>carbamoyl phosphate</name>
        <dbReference type="ChEBI" id="CHEBI:58228"/>
    </ligand>
</feature>
<feature type="binding site" evidence="1">
    <location>
        <position position="160"/>
    </location>
    <ligand>
        <name>L-aspartate</name>
        <dbReference type="ChEBI" id="CHEBI:29991"/>
    </ligand>
</feature>
<feature type="binding site" evidence="1">
    <location>
        <position position="211"/>
    </location>
    <ligand>
        <name>L-aspartate</name>
        <dbReference type="ChEBI" id="CHEBI:29991"/>
    </ligand>
</feature>
<feature type="binding site" evidence="1">
    <location>
        <position position="252"/>
    </location>
    <ligand>
        <name>carbamoyl phosphate</name>
        <dbReference type="ChEBI" id="CHEBI:58228"/>
    </ligand>
</feature>
<feature type="binding site" evidence="1">
    <location>
        <position position="253"/>
    </location>
    <ligand>
        <name>carbamoyl phosphate</name>
        <dbReference type="ChEBI" id="CHEBI:58228"/>
    </ligand>
</feature>
<reference key="1">
    <citation type="journal article" date="2006" name="J. Bacteriol.">
        <title>Pathogenomic sequence analysis of Bacillus cereus and Bacillus thuringiensis isolates closely related to Bacillus anthracis.</title>
        <authorList>
            <person name="Han C.S."/>
            <person name="Xie G."/>
            <person name="Challacombe J.F."/>
            <person name="Altherr M.R."/>
            <person name="Bhotika S.S."/>
            <person name="Bruce D."/>
            <person name="Campbell C.S."/>
            <person name="Campbell M.L."/>
            <person name="Chen J."/>
            <person name="Chertkov O."/>
            <person name="Cleland C."/>
            <person name="Dimitrijevic M."/>
            <person name="Doggett N.A."/>
            <person name="Fawcett J.J."/>
            <person name="Glavina T."/>
            <person name="Goodwin L.A."/>
            <person name="Hill K.K."/>
            <person name="Hitchcock P."/>
            <person name="Jackson P.J."/>
            <person name="Keim P."/>
            <person name="Kewalramani A.R."/>
            <person name="Longmire J."/>
            <person name="Lucas S."/>
            <person name="Malfatti S."/>
            <person name="McMurry K."/>
            <person name="Meincke L.J."/>
            <person name="Misra M."/>
            <person name="Moseman B.L."/>
            <person name="Mundt M."/>
            <person name="Munk A.C."/>
            <person name="Okinaka R.T."/>
            <person name="Parson-Quintana B."/>
            <person name="Reilly L.P."/>
            <person name="Richardson P."/>
            <person name="Robinson D.L."/>
            <person name="Rubin E."/>
            <person name="Saunders E."/>
            <person name="Tapia R."/>
            <person name="Tesmer J.G."/>
            <person name="Thayer N."/>
            <person name="Thompson L.S."/>
            <person name="Tice H."/>
            <person name="Ticknor L.O."/>
            <person name="Wills P.L."/>
            <person name="Brettin T.S."/>
            <person name="Gilna P."/>
        </authorList>
    </citation>
    <scope>NUCLEOTIDE SEQUENCE [LARGE SCALE GENOMIC DNA]</scope>
    <source>
        <strain>97-27</strain>
    </source>
</reference>
<keyword id="KW-0665">Pyrimidine biosynthesis</keyword>
<keyword id="KW-0808">Transferase</keyword>
<gene>
    <name evidence="1" type="primary">pyrB</name>
    <name type="ordered locus">BT9727_3631</name>
</gene>
<accession>Q6HES5</accession>
<organism>
    <name type="scientific">Bacillus thuringiensis subsp. konkukian (strain 97-27)</name>
    <dbReference type="NCBI Taxonomy" id="281309"/>
    <lineage>
        <taxon>Bacteria</taxon>
        <taxon>Bacillati</taxon>
        <taxon>Bacillota</taxon>
        <taxon>Bacilli</taxon>
        <taxon>Bacillales</taxon>
        <taxon>Bacillaceae</taxon>
        <taxon>Bacillus</taxon>
        <taxon>Bacillus cereus group</taxon>
    </lineage>
</organism>
<dbReference type="EC" id="2.1.3.2" evidence="1"/>
<dbReference type="EMBL" id="AE017355">
    <property type="protein sequence ID" value="AAT60636.1"/>
    <property type="molecule type" value="Genomic_DNA"/>
</dbReference>
<dbReference type="RefSeq" id="WP_000018849.1">
    <property type="nucleotide sequence ID" value="NC_005957.1"/>
</dbReference>
<dbReference type="RefSeq" id="YP_037951.1">
    <property type="nucleotide sequence ID" value="NC_005957.1"/>
</dbReference>
<dbReference type="SMR" id="Q6HES5"/>
<dbReference type="GeneID" id="75087026"/>
<dbReference type="KEGG" id="btk:BT9727_3631"/>
<dbReference type="PATRIC" id="fig|281309.8.peg.3869"/>
<dbReference type="HOGENOM" id="CLU_043846_2_1_9"/>
<dbReference type="UniPathway" id="UPA00070">
    <property type="reaction ID" value="UER00116"/>
</dbReference>
<dbReference type="Proteomes" id="UP000001301">
    <property type="component" value="Chromosome"/>
</dbReference>
<dbReference type="GO" id="GO:0005829">
    <property type="term" value="C:cytosol"/>
    <property type="evidence" value="ECO:0007669"/>
    <property type="project" value="TreeGrafter"/>
</dbReference>
<dbReference type="GO" id="GO:0016597">
    <property type="term" value="F:amino acid binding"/>
    <property type="evidence" value="ECO:0007669"/>
    <property type="project" value="InterPro"/>
</dbReference>
<dbReference type="GO" id="GO:0004070">
    <property type="term" value="F:aspartate carbamoyltransferase activity"/>
    <property type="evidence" value="ECO:0007669"/>
    <property type="project" value="UniProtKB-UniRule"/>
</dbReference>
<dbReference type="GO" id="GO:0006207">
    <property type="term" value="P:'de novo' pyrimidine nucleobase biosynthetic process"/>
    <property type="evidence" value="ECO:0007669"/>
    <property type="project" value="InterPro"/>
</dbReference>
<dbReference type="GO" id="GO:0044205">
    <property type="term" value="P:'de novo' UMP biosynthetic process"/>
    <property type="evidence" value="ECO:0007669"/>
    <property type="project" value="UniProtKB-UniRule"/>
</dbReference>
<dbReference type="GO" id="GO:0006520">
    <property type="term" value="P:amino acid metabolic process"/>
    <property type="evidence" value="ECO:0007669"/>
    <property type="project" value="InterPro"/>
</dbReference>
<dbReference type="FunFam" id="3.40.50.1370:FF:000001">
    <property type="entry name" value="Aspartate carbamoyltransferase"/>
    <property type="match status" value="1"/>
</dbReference>
<dbReference type="FunFam" id="3.40.50.1370:FF:000011">
    <property type="entry name" value="Aspartate carbamoyltransferase"/>
    <property type="match status" value="1"/>
</dbReference>
<dbReference type="Gene3D" id="3.40.50.1370">
    <property type="entry name" value="Aspartate/ornithine carbamoyltransferase"/>
    <property type="match status" value="2"/>
</dbReference>
<dbReference type="HAMAP" id="MF_00001">
    <property type="entry name" value="Asp_carb_tr"/>
    <property type="match status" value="1"/>
</dbReference>
<dbReference type="InterPro" id="IPR006132">
    <property type="entry name" value="Asp/Orn_carbamoyltranf_P-bd"/>
</dbReference>
<dbReference type="InterPro" id="IPR006130">
    <property type="entry name" value="Asp/Orn_carbamoylTrfase"/>
</dbReference>
<dbReference type="InterPro" id="IPR036901">
    <property type="entry name" value="Asp/Orn_carbamoylTrfase_sf"/>
</dbReference>
<dbReference type="InterPro" id="IPR002082">
    <property type="entry name" value="Asp_carbamoyltransf"/>
</dbReference>
<dbReference type="InterPro" id="IPR006131">
    <property type="entry name" value="Asp_carbamoyltransf_Asp/Orn-bd"/>
</dbReference>
<dbReference type="NCBIfam" id="TIGR00670">
    <property type="entry name" value="asp_carb_tr"/>
    <property type="match status" value="1"/>
</dbReference>
<dbReference type="NCBIfam" id="NF002032">
    <property type="entry name" value="PRK00856.1"/>
    <property type="match status" value="1"/>
</dbReference>
<dbReference type="PANTHER" id="PTHR45753:SF6">
    <property type="entry name" value="ASPARTATE CARBAMOYLTRANSFERASE"/>
    <property type="match status" value="1"/>
</dbReference>
<dbReference type="PANTHER" id="PTHR45753">
    <property type="entry name" value="ORNITHINE CARBAMOYLTRANSFERASE, MITOCHONDRIAL"/>
    <property type="match status" value="1"/>
</dbReference>
<dbReference type="Pfam" id="PF00185">
    <property type="entry name" value="OTCace"/>
    <property type="match status" value="1"/>
</dbReference>
<dbReference type="Pfam" id="PF02729">
    <property type="entry name" value="OTCace_N"/>
    <property type="match status" value="1"/>
</dbReference>
<dbReference type="PRINTS" id="PR00100">
    <property type="entry name" value="AOTCASE"/>
</dbReference>
<dbReference type="PRINTS" id="PR00101">
    <property type="entry name" value="ATCASE"/>
</dbReference>
<dbReference type="SUPFAM" id="SSF53671">
    <property type="entry name" value="Aspartate/ornithine carbamoyltransferase"/>
    <property type="match status" value="1"/>
</dbReference>
<dbReference type="PROSITE" id="PS00097">
    <property type="entry name" value="CARBAMOYLTRANSFERASE"/>
    <property type="match status" value="1"/>
</dbReference>
<protein>
    <recommendedName>
        <fullName evidence="1">Aspartate carbamoyltransferase catalytic subunit</fullName>
        <ecNumber evidence="1">2.1.3.2</ecNumber>
    </recommendedName>
    <alternativeName>
        <fullName evidence="1">Aspartate transcarbamylase</fullName>
        <shortName evidence="1">ATCase</shortName>
    </alternativeName>
</protein>
<evidence type="ECO:0000255" key="1">
    <source>
        <dbReference type="HAMAP-Rule" id="MF_00001"/>
    </source>
</evidence>